<geneLocation type="plasmid">
    <name>large ECE</name>
</geneLocation>
<protein>
    <recommendedName>
        <fullName>Uncharacterized protein MJECL34</fullName>
    </recommendedName>
</protein>
<sequence length="295" mass="33624">MKHMTPGLTEKKLYVYYDERYPYSWIPHNVAKHISKELEKYDFEVIDAPSLQRVLGEGSKDTNKEYVVVFAQDVVPDLVLDNPDNPTSNSLLRRFLNAGQIIVWMGDSPQYVGRADDNQKLNPPVMQNVLSMNPNYITTNKRISLTISGIVLSLPLWVGTKPHNKTPPHGVSGVSINPLAVAIDNVQYAHAFIISYKQSASGFVRIYDFPINKEELVTKQFIRGILGVATRDVTTPIWNKIEILSEEVNKIDEKFDTKFNTLKSEIDTFKTTINEILKLEKEILEVIQKKCENKE</sequence>
<feature type="chain" id="PRO_0000107518" description="Uncharacterized protein MJECL34">
    <location>
        <begin position="1"/>
        <end position="295"/>
    </location>
</feature>
<reference key="1">
    <citation type="journal article" date="1996" name="Science">
        <title>Complete genome sequence of the methanogenic archaeon, Methanococcus jannaschii.</title>
        <authorList>
            <person name="Bult C.J."/>
            <person name="White O."/>
            <person name="Olsen G.J."/>
            <person name="Zhou L."/>
            <person name="Fleischmann R.D."/>
            <person name="Sutton G.G."/>
            <person name="Blake J.A."/>
            <person name="FitzGerald L.M."/>
            <person name="Clayton R.A."/>
            <person name="Gocayne J.D."/>
            <person name="Kerlavage A.R."/>
            <person name="Dougherty B.A."/>
            <person name="Tomb J.-F."/>
            <person name="Adams M.D."/>
            <person name="Reich C.I."/>
            <person name="Overbeek R."/>
            <person name="Kirkness E.F."/>
            <person name="Weinstock K.G."/>
            <person name="Merrick J.M."/>
            <person name="Glodek A."/>
            <person name="Scott J.L."/>
            <person name="Geoghagen N.S.M."/>
            <person name="Weidman J.F."/>
            <person name="Fuhrmann J.L."/>
            <person name="Nguyen D."/>
            <person name="Utterback T.R."/>
            <person name="Kelley J.M."/>
            <person name="Peterson J.D."/>
            <person name="Sadow P.W."/>
            <person name="Hanna M.C."/>
            <person name="Cotton M.D."/>
            <person name="Roberts K.M."/>
            <person name="Hurst M.A."/>
            <person name="Kaine B.P."/>
            <person name="Borodovsky M."/>
            <person name="Klenk H.-P."/>
            <person name="Fraser C.M."/>
            <person name="Smith H.O."/>
            <person name="Woese C.R."/>
            <person name="Venter J.C."/>
        </authorList>
    </citation>
    <scope>NUCLEOTIDE SEQUENCE [LARGE SCALE GENOMIC DNA]</scope>
    <source>
        <strain>ATCC 43067 / DSM 2661 / JAL-1 / JCM 10045 / NBRC 100440</strain>
    </source>
</reference>
<proteinExistence type="predicted"/>
<accession>Q60258</accession>
<gene>
    <name type="ordered locus">MJECL34</name>
</gene>
<keyword id="KW-0614">Plasmid</keyword>
<keyword id="KW-1185">Reference proteome</keyword>
<name>Y3534_METJA</name>
<organism>
    <name type="scientific">Methanocaldococcus jannaschii (strain ATCC 43067 / DSM 2661 / JAL-1 / JCM 10045 / NBRC 100440)</name>
    <name type="common">Methanococcus jannaschii</name>
    <dbReference type="NCBI Taxonomy" id="243232"/>
    <lineage>
        <taxon>Archaea</taxon>
        <taxon>Methanobacteriati</taxon>
        <taxon>Methanobacteriota</taxon>
        <taxon>Methanomada group</taxon>
        <taxon>Methanococci</taxon>
        <taxon>Methanococcales</taxon>
        <taxon>Methanocaldococcaceae</taxon>
        <taxon>Methanocaldococcus</taxon>
    </lineage>
</organism>
<dbReference type="EMBL" id="L77118">
    <property type="protein sequence ID" value="AAC37103.1"/>
    <property type="molecule type" value="Genomic_DNA"/>
</dbReference>
<dbReference type="PIR" id="A64514">
    <property type="entry name" value="A64514"/>
</dbReference>
<dbReference type="SMR" id="Q60258"/>
<dbReference type="PaxDb" id="243232-MJ_ECL34"/>
<dbReference type="EnsemblBacteria" id="AAC37103">
    <property type="protein sequence ID" value="AAC37103"/>
    <property type="gene ID" value="MJ_ECL34"/>
</dbReference>
<dbReference type="KEGG" id="mja:MJ_ECL34"/>
<dbReference type="eggNOG" id="arCOG12101">
    <property type="taxonomic scope" value="Archaea"/>
</dbReference>
<dbReference type="HOGENOM" id="CLU_942028_0_0_2"/>
<dbReference type="InParanoid" id="Q60258"/>
<dbReference type="OrthoDB" id="25344at2157"/>
<dbReference type="Proteomes" id="UP000000805">
    <property type="component" value="Plasmid pDSM2661_1"/>
</dbReference>